<organism>
    <name type="scientific">Borrelia hermsii (strain HS1 / DAH)</name>
    <dbReference type="NCBI Taxonomy" id="314723"/>
    <lineage>
        <taxon>Bacteria</taxon>
        <taxon>Pseudomonadati</taxon>
        <taxon>Spirochaetota</taxon>
        <taxon>Spirochaetia</taxon>
        <taxon>Spirochaetales</taxon>
        <taxon>Borreliaceae</taxon>
        <taxon>Borrelia</taxon>
    </lineage>
</organism>
<name>RL9_BORHD</name>
<evidence type="ECO:0000255" key="1">
    <source>
        <dbReference type="HAMAP-Rule" id="MF_00503"/>
    </source>
</evidence>
<evidence type="ECO:0000305" key="2"/>
<gene>
    <name evidence="1" type="primary">rplI</name>
    <name type="ordered locus">BH0112</name>
</gene>
<accession>B2S1U6</accession>
<comment type="function">
    <text evidence="1">Binds to the 23S rRNA.</text>
</comment>
<comment type="similarity">
    <text evidence="1">Belongs to the bacterial ribosomal protein bL9 family.</text>
</comment>
<reference key="1">
    <citation type="submission" date="2004-12" db="EMBL/GenBank/DDBJ databases">
        <title>The genome sequence of Borrelia hermsii and Borrelia turicatae: comparative analysis of two agents of endemic N. America relapsing fever.</title>
        <authorList>
            <person name="Porcella S.F."/>
            <person name="Raffel S.J."/>
            <person name="Schrumpf M.E."/>
            <person name="Montgomery B."/>
            <person name="Smith T."/>
            <person name="Schwan T.G."/>
        </authorList>
    </citation>
    <scope>NUCLEOTIDE SEQUENCE [LARGE SCALE GENOMIC DNA]</scope>
    <source>
        <strain>HS1 / DAH</strain>
    </source>
</reference>
<proteinExistence type="inferred from homology"/>
<dbReference type="EMBL" id="CP000048">
    <property type="protein sequence ID" value="AAX16633.1"/>
    <property type="molecule type" value="Genomic_DNA"/>
</dbReference>
<dbReference type="RefSeq" id="WP_012421890.1">
    <property type="nucleotide sequence ID" value="NZ_CP073136.1"/>
</dbReference>
<dbReference type="SMR" id="B2S1U6"/>
<dbReference type="GeneID" id="71842923"/>
<dbReference type="KEGG" id="bhr:BH0112"/>
<dbReference type="HOGENOM" id="CLU_078938_4_1_12"/>
<dbReference type="Proteomes" id="UP000008834">
    <property type="component" value="Chromosome"/>
</dbReference>
<dbReference type="GO" id="GO:1990904">
    <property type="term" value="C:ribonucleoprotein complex"/>
    <property type="evidence" value="ECO:0007669"/>
    <property type="project" value="UniProtKB-KW"/>
</dbReference>
<dbReference type="GO" id="GO:0005840">
    <property type="term" value="C:ribosome"/>
    <property type="evidence" value="ECO:0007669"/>
    <property type="project" value="UniProtKB-KW"/>
</dbReference>
<dbReference type="GO" id="GO:0019843">
    <property type="term" value="F:rRNA binding"/>
    <property type="evidence" value="ECO:0007669"/>
    <property type="project" value="UniProtKB-UniRule"/>
</dbReference>
<dbReference type="GO" id="GO:0003735">
    <property type="term" value="F:structural constituent of ribosome"/>
    <property type="evidence" value="ECO:0007669"/>
    <property type="project" value="InterPro"/>
</dbReference>
<dbReference type="GO" id="GO:0006412">
    <property type="term" value="P:translation"/>
    <property type="evidence" value="ECO:0007669"/>
    <property type="project" value="UniProtKB-UniRule"/>
</dbReference>
<dbReference type="FunFam" id="3.40.5.10:FF:000003">
    <property type="entry name" value="50S ribosomal protein L9"/>
    <property type="match status" value="1"/>
</dbReference>
<dbReference type="Gene3D" id="3.10.430.100">
    <property type="entry name" value="Ribosomal protein L9, C-terminal domain"/>
    <property type="match status" value="1"/>
</dbReference>
<dbReference type="Gene3D" id="3.40.5.10">
    <property type="entry name" value="Ribosomal protein L9, N-terminal domain"/>
    <property type="match status" value="1"/>
</dbReference>
<dbReference type="HAMAP" id="MF_00503">
    <property type="entry name" value="Ribosomal_bL9"/>
    <property type="match status" value="1"/>
</dbReference>
<dbReference type="InterPro" id="IPR000244">
    <property type="entry name" value="Ribosomal_bL9"/>
</dbReference>
<dbReference type="InterPro" id="IPR009027">
    <property type="entry name" value="Ribosomal_bL9/RNase_H1_N"/>
</dbReference>
<dbReference type="InterPro" id="IPR020594">
    <property type="entry name" value="Ribosomal_bL9_bac/chp"/>
</dbReference>
<dbReference type="InterPro" id="IPR020069">
    <property type="entry name" value="Ribosomal_bL9_C"/>
</dbReference>
<dbReference type="InterPro" id="IPR036791">
    <property type="entry name" value="Ribosomal_bL9_C_sf"/>
</dbReference>
<dbReference type="InterPro" id="IPR020070">
    <property type="entry name" value="Ribosomal_bL9_N"/>
</dbReference>
<dbReference type="InterPro" id="IPR036935">
    <property type="entry name" value="Ribosomal_bL9_N_sf"/>
</dbReference>
<dbReference type="NCBIfam" id="TIGR00158">
    <property type="entry name" value="L9"/>
    <property type="match status" value="1"/>
</dbReference>
<dbReference type="PANTHER" id="PTHR21368">
    <property type="entry name" value="50S RIBOSOMAL PROTEIN L9"/>
    <property type="match status" value="1"/>
</dbReference>
<dbReference type="Pfam" id="PF03948">
    <property type="entry name" value="Ribosomal_L9_C"/>
    <property type="match status" value="1"/>
</dbReference>
<dbReference type="Pfam" id="PF01281">
    <property type="entry name" value="Ribosomal_L9_N"/>
    <property type="match status" value="1"/>
</dbReference>
<dbReference type="SUPFAM" id="SSF55658">
    <property type="entry name" value="L9 N-domain-like"/>
    <property type="match status" value="1"/>
</dbReference>
<dbReference type="SUPFAM" id="SSF55653">
    <property type="entry name" value="Ribosomal protein L9 C-domain"/>
    <property type="match status" value="1"/>
</dbReference>
<dbReference type="PROSITE" id="PS00651">
    <property type="entry name" value="RIBOSOMAL_L9"/>
    <property type="match status" value="1"/>
</dbReference>
<protein>
    <recommendedName>
        <fullName evidence="1">Large ribosomal subunit protein bL9</fullName>
    </recommendedName>
    <alternativeName>
        <fullName evidence="2">50S ribosomal protein L9</fullName>
    </alternativeName>
</protein>
<feature type="chain" id="PRO_1000126873" description="Large ribosomal subunit protein bL9">
    <location>
        <begin position="1"/>
        <end position="164"/>
    </location>
</feature>
<keyword id="KW-0687">Ribonucleoprotein</keyword>
<keyword id="KW-0689">Ribosomal protein</keyword>
<keyword id="KW-0694">RNA-binding</keyword>
<keyword id="KW-0699">rRNA-binding</keyword>
<sequence length="164" mass="18911">MRVILKEDFINLGKEGDTVDVKDGFARNYLLPKGFAVFSNKHNIDIFNQKRRAILKRQETRKKIALELKAKLDKVSLEFVMQSNDGGKLFHSINSLNIADELLKLGFEIERRKIDIHYGTLKTFGIYDVTIKLYEGINAVIKVEIKREEKKKSLKKSKSVAKEV</sequence>